<dbReference type="EC" id="4.2.1.11"/>
<dbReference type="EMBL" id="AF382946">
    <property type="protein sequence ID" value="AAP30720.1"/>
    <property type="molecule type" value="mRNA"/>
</dbReference>
<dbReference type="SMR" id="Q870B9"/>
<dbReference type="Allergome" id="3465">
    <property type="allergen name" value="Rho m 1.0101"/>
</dbReference>
<dbReference type="Allergome" id="613">
    <property type="allergen name" value="Rho m 1"/>
</dbReference>
<dbReference type="UniPathway" id="UPA00109">
    <property type="reaction ID" value="UER00187"/>
</dbReference>
<dbReference type="GO" id="GO:0000015">
    <property type="term" value="C:phosphopyruvate hydratase complex"/>
    <property type="evidence" value="ECO:0007669"/>
    <property type="project" value="InterPro"/>
</dbReference>
<dbReference type="GO" id="GO:0000287">
    <property type="term" value="F:magnesium ion binding"/>
    <property type="evidence" value="ECO:0007669"/>
    <property type="project" value="InterPro"/>
</dbReference>
<dbReference type="GO" id="GO:0004634">
    <property type="term" value="F:phosphopyruvate hydratase activity"/>
    <property type="evidence" value="ECO:0007669"/>
    <property type="project" value="UniProtKB-EC"/>
</dbReference>
<dbReference type="GO" id="GO:0006096">
    <property type="term" value="P:glycolytic process"/>
    <property type="evidence" value="ECO:0007669"/>
    <property type="project" value="UniProtKB-UniPathway"/>
</dbReference>
<dbReference type="CDD" id="cd03313">
    <property type="entry name" value="enolase"/>
    <property type="match status" value="1"/>
</dbReference>
<dbReference type="FunFam" id="3.30.390.10:FF:000001">
    <property type="entry name" value="Enolase"/>
    <property type="match status" value="1"/>
</dbReference>
<dbReference type="FunFam" id="3.20.20.120:FF:000002">
    <property type="entry name" value="Enolase 1"/>
    <property type="match status" value="1"/>
</dbReference>
<dbReference type="Gene3D" id="3.20.20.120">
    <property type="entry name" value="Enolase-like C-terminal domain"/>
    <property type="match status" value="1"/>
</dbReference>
<dbReference type="Gene3D" id="3.30.390.10">
    <property type="entry name" value="Enolase-like, N-terminal domain"/>
    <property type="match status" value="1"/>
</dbReference>
<dbReference type="HAMAP" id="MF_00318">
    <property type="entry name" value="Enolase"/>
    <property type="match status" value="1"/>
</dbReference>
<dbReference type="InterPro" id="IPR000941">
    <property type="entry name" value="Enolase"/>
</dbReference>
<dbReference type="InterPro" id="IPR036849">
    <property type="entry name" value="Enolase-like_C_sf"/>
</dbReference>
<dbReference type="InterPro" id="IPR029017">
    <property type="entry name" value="Enolase-like_N"/>
</dbReference>
<dbReference type="InterPro" id="IPR020810">
    <property type="entry name" value="Enolase_C"/>
</dbReference>
<dbReference type="InterPro" id="IPR020809">
    <property type="entry name" value="Enolase_CS"/>
</dbReference>
<dbReference type="InterPro" id="IPR020811">
    <property type="entry name" value="Enolase_N"/>
</dbReference>
<dbReference type="NCBIfam" id="TIGR01060">
    <property type="entry name" value="eno"/>
    <property type="match status" value="1"/>
</dbReference>
<dbReference type="PANTHER" id="PTHR11902">
    <property type="entry name" value="ENOLASE"/>
    <property type="match status" value="1"/>
</dbReference>
<dbReference type="PANTHER" id="PTHR11902:SF1">
    <property type="entry name" value="ENOLASE"/>
    <property type="match status" value="1"/>
</dbReference>
<dbReference type="Pfam" id="PF00113">
    <property type="entry name" value="Enolase_C"/>
    <property type="match status" value="1"/>
</dbReference>
<dbReference type="Pfam" id="PF03952">
    <property type="entry name" value="Enolase_N"/>
    <property type="match status" value="1"/>
</dbReference>
<dbReference type="PIRSF" id="PIRSF001400">
    <property type="entry name" value="Enolase"/>
    <property type="match status" value="1"/>
</dbReference>
<dbReference type="PRINTS" id="PR00148">
    <property type="entry name" value="ENOLASE"/>
</dbReference>
<dbReference type="SFLD" id="SFLDS00001">
    <property type="entry name" value="Enolase"/>
    <property type="match status" value="1"/>
</dbReference>
<dbReference type="SFLD" id="SFLDF00002">
    <property type="entry name" value="enolase"/>
    <property type="match status" value="1"/>
</dbReference>
<dbReference type="SMART" id="SM01192">
    <property type="entry name" value="Enolase_C"/>
    <property type="match status" value="1"/>
</dbReference>
<dbReference type="SMART" id="SM01193">
    <property type="entry name" value="Enolase_N"/>
    <property type="match status" value="1"/>
</dbReference>
<dbReference type="SUPFAM" id="SSF51604">
    <property type="entry name" value="Enolase C-terminal domain-like"/>
    <property type="match status" value="1"/>
</dbReference>
<dbReference type="SUPFAM" id="SSF54826">
    <property type="entry name" value="Enolase N-terminal domain-like"/>
    <property type="match status" value="1"/>
</dbReference>
<dbReference type="PROSITE" id="PS00164">
    <property type="entry name" value="ENOLASE"/>
    <property type="match status" value="1"/>
</dbReference>
<proteinExistence type="evidence at protein level"/>
<evidence type="ECO:0000250" key="1"/>
<evidence type="ECO:0000269" key="2">
    <source>
    </source>
</evidence>
<evidence type="ECO:0000305" key="3"/>
<name>ENO_RHOMI</name>
<reference key="1">
    <citation type="journal article" date="2002" name="J. Biomed. Sci.">
        <title>Characterization of enolase allergen from Rhodotorula mucilaginosa.</title>
        <authorList>
            <person name="Chang C.-Y."/>
            <person name="Chou H."/>
            <person name="Tam M.F."/>
            <person name="Tang R.B."/>
            <person name="Lai H.-Y."/>
            <person name="Shen H.-D."/>
        </authorList>
    </citation>
    <scope>NUCLEOTIDE SEQUENCE [MRNA]</scope>
    <scope>ALLERGEN</scope>
</reference>
<comment type="catalytic activity">
    <reaction>
        <text>(2R)-2-phosphoglycerate = phosphoenolpyruvate + H2O</text>
        <dbReference type="Rhea" id="RHEA:10164"/>
        <dbReference type="ChEBI" id="CHEBI:15377"/>
        <dbReference type="ChEBI" id="CHEBI:58289"/>
        <dbReference type="ChEBI" id="CHEBI:58702"/>
        <dbReference type="EC" id="4.2.1.11"/>
    </reaction>
</comment>
<comment type="cofactor">
    <cofactor evidence="1">
        <name>Mg(2+)</name>
        <dbReference type="ChEBI" id="CHEBI:18420"/>
    </cofactor>
    <text evidence="1">Mg(2+) is required for catalysis and for stabilizing the dimer.</text>
</comment>
<comment type="pathway">
    <text>Carbohydrate degradation; glycolysis; pyruvate from D-glyceraldehyde 3-phosphate: step 4/5.</text>
</comment>
<comment type="subunit">
    <text evidence="1">Homodimer.</text>
</comment>
<comment type="subcellular location">
    <subcellularLocation>
        <location evidence="1">Cytoplasm</location>
    </subcellularLocation>
</comment>
<comment type="allergen">
    <text evidence="2">Causes an allergic reaction in human. Binds to IgE.</text>
</comment>
<comment type="similarity">
    <text evidence="3">Belongs to the enolase family.</text>
</comment>
<accession>Q870B9</accession>
<protein>
    <recommendedName>
        <fullName>Enolase</fullName>
        <ecNumber>4.2.1.11</ecNumber>
    </recommendedName>
    <alternativeName>
        <fullName>2-phospho-D-glycerate hydro-lyase</fullName>
    </alternativeName>
    <alternativeName>
        <fullName>2-phosphoglycerate dehydratase</fullName>
    </alternativeName>
    <allergenName>Rho m 1</allergenName>
</protein>
<organism>
    <name type="scientific">Rhodotorula mucilaginosa</name>
    <name type="common">Yeast</name>
    <name type="synonym">Rhodotorula rubra</name>
    <dbReference type="NCBI Taxonomy" id="5537"/>
    <lineage>
        <taxon>Eukaryota</taxon>
        <taxon>Fungi</taxon>
        <taxon>Dikarya</taxon>
        <taxon>Basidiomycota</taxon>
        <taxon>Pucciniomycotina</taxon>
        <taxon>Microbotryomycetes</taxon>
        <taxon>Sporidiobolales</taxon>
        <taxon>Sporidiobolaceae</taxon>
        <taxon>Rhodotorula</taxon>
    </lineage>
</organism>
<gene>
    <name type="primary">ENO</name>
</gene>
<keyword id="KW-0020">Allergen</keyword>
<keyword id="KW-0963">Cytoplasm</keyword>
<keyword id="KW-0324">Glycolysis</keyword>
<keyword id="KW-0456">Lyase</keyword>
<keyword id="KW-0460">Magnesium</keyword>
<keyword id="KW-0479">Metal-binding</keyword>
<sequence length="439" mass="47140">MAISKIHSRYVYDSRGNPTVEVELTTEKGTFRSIVPSGASTGVHEALELRDGDKSKWLGKGVLKAVANVNDTIAPALIEANIDVADQAKIDEFLLKLDGTPNKAKLGANAILGVSLAAAKAGAAQKDVPLYKHIADISKAKEGKFVLPVPFQNVLNGGSHAGGDLAFQEFMIVPSGAPSFSEGLRIGSEVYHHLKSLTKKKYGQSAGNVGDEGGVAPDIKTAKEALDLIVSAIEAAGYTGQVDIAMDVASSEFYKDGLYDLDFKNPNSDKSKWITGPQLAELYEQLLNEYPIVSIEDPFAEDDWEAWSHFFSKVEGKTQIVGDDLTVTNPIRIKKAIETKAADALLLKVNQIGTLTESIQAANDSYAAGWGVMVSHRSGETEDTFIADLSVGIRSGQTKTGAPARSERLAKLNQILRIEEELGDKAIYAGKDFHKAHSL</sequence>
<feature type="chain" id="PRO_0000134057" description="Enolase">
    <location>
        <begin position="1"/>
        <end position="439"/>
    </location>
</feature>
<feature type="active site" description="Proton donor" evidence="1">
    <location>
        <position position="212"/>
    </location>
</feature>
<feature type="active site" description="Proton acceptor" evidence="1">
    <location>
        <position position="348"/>
    </location>
</feature>
<feature type="binding site" evidence="1">
    <location>
        <position position="160"/>
    </location>
    <ligand>
        <name>substrate</name>
    </ligand>
</feature>
<feature type="binding site" evidence="1">
    <location>
        <position position="169"/>
    </location>
    <ligand>
        <name>substrate</name>
    </ligand>
</feature>
<feature type="binding site" evidence="1">
    <location>
        <position position="247"/>
    </location>
    <ligand>
        <name>Mg(2+)</name>
        <dbReference type="ChEBI" id="CHEBI:18420"/>
    </ligand>
</feature>
<feature type="binding site" evidence="1">
    <location>
        <position position="296"/>
    </location>
    <ligand>
        <name>Mg(2+)</name>
        <dbReference type="ChEBI" id="CHEBI:18420"/>
    </ligand>
</feature>
<feature type="binding site" evidence="1">
    <location>
        <position position="296"/>
    </location>
    <ligand>
        <name>substrate</name>
    </ligand>
</feature>
<feature type="binding site" evidence="1">
    <location>
        <position position="323"/>
    </location>
    <ligand>
        <name>Mg(2+)</name>
        <dbReference type="ChEBI" id="CHEBI:18420"/>
    </ligand>
</feature>
<feature type="binding site" evidence="1">
    <location>
        <position position="323"/>
    </location>
    <ligand>
        <name>substrate</name>
    </ligand>
</feature>
<feature type="binding site" evidence="1">
    <location>
        <begin position="375"/>
        <end position="378"/>
    </location>
    <ligand>
        <name>substrate</name>
    </ligand>
</feature>
<feature type="binding site" evidence="1">
    <location>
        <position position="399"/>
    </location>
    <ligand>
        <name>substrate</name>
    </ligand>
</feature>